<keyword id="KW-0150">Chloroplast</keyword>
<keyword id="KW-0507">mRNA processing</keyword>
<keyword id="KW-0934">Plastid</keyword>
<keyword id="KW-0694">RNA-binding</keyword>
<keyword id="KW-0819">tRNA processing</keyword>
<name>MATK_LILCA</name>
<reference key="1">
    <citation type="submission" date="2000-09" db="EMBL/GenBank/DDBJ databases">
        <title>Lilium canadense maturase (matK) gene, complete cds; chloroplast gene.</title>
        <authorList>
            <person name="Nishikawa T."/>
            <person name="Okazaki K."/>
            <person name="Arakawa K."/>
            <person name="Nagamine T."/>
        </authorList>
    </citation>
    <scope>NUCLEOTIDE SEQUENCE [GENOMIC DNA]</scope>
</reference>
<comment type="function">
    <text evidence="1">Usually encoded in the trnK tRNA gene intron. Probably assists in splicing its own and other chloroplast group II introns.</text>
</comment>
<comment type="subcellular location">
    <subcellularLocation>
        <location>Plastid</location>
        <location>Chloroplast</location>
    </subcellularLocation>
</comment>
<comment type="similarity">
    <text evidence="1">Belongs to the intron maturase 2 family. MatK subfamily.</text>
</comment>
<geneLocation type="chloroplast"/>
<proteinExistence type="inferred from homology"/>
<feature type="chain" id="PRO_0000143474" description="Maturase K">
    <location>
        <begin position="1"/>
        <end position="512"/>
    </location>
</feature>
<accession>P68750</accession>
<accession>Q9TMB3</accession>
<evidence type="ECO:0000255" key="1">
    <source>
        <dbReference type="HAMAP-Rule" id="MF_01390"/>
    </source>
</evidence>
<protein>
    <recommendedName>
        <fullName evidence="1">Maturase K</fullName>
    </recommendedName>
    <alternativeName>
        <fullName evidence="1">Intron maturase</fullName>
    </alternativeName>
</protein>
<sequence length="512" mass="60953">MEEFQGYLKKDRSLQQHFLYPLLLQEYIYTLAHDDSLNGSIFYEPIEFIGYDNKFSLVLVKRLITRMYQQNFLIYLVNDSNQNRFGGHTNYFYSHFFYSKMVSKGFSVIVEIPFSLRLVSSSEEKEIPKSQNLGSIHSIFPFLEDKLSHLNNVSDILIPHPIHFEILVQILQCWIQDVPSLHLLRFFLHKYQNLNKTIQSNKTIYVFSKENKRLFWFLYNSYVSECEFLLVFFHKQSCYLRSTSSGAFLERSHFYGKMEHIIIVCCNNFQKTLWPVKDPLIHYVRYQGKAILASRGTHLLMKKWRYYFVNFWQYYFHFWSQPYRMHINSLLNYSFYFMGYLLRVLINPYAVKNQMLENSFLIDTVIKKFDTIIPIIPLIGSLSKAKFCTFSGHPISKPIWADFSDFDIIDRFGRICRNLSHYHNGSSKKQSLYRIKYILRLSCARTLACKHKSTARALLQRLGSGLLEEFFTEEEQVLSFIFPKTTLFTLHGSHRERIWSLDIIRINDLVNN</sequence>
<organism>
    <name type="scientific">Lilium canadense</name>
    <name type="common">Canada lily</name>
    <dbReference type="NCBI Taxonomy" id="84045"/>
    <lineage>
        <taxon>Eukaryota</taxon>
        <taxon>Viridiplantae</taxon>
        <taxon>Streptophyta</taxon>
        <taxon>Embryophyta</taxon>
        <taxon>Tracheophyta</taxon>
        <taxon>Spermatophyta</taxon>
        <taxon>Magnoliopsida</taxon>
        <taxon>Liliopsida</taxon>
        <taxon>Liliales</taxon>
        <taxon>Liliaceae</taxon>
        <taxon>Lilium</taxon>
    </lineage>
</organism>
<dbReference type="EMBL" id="AB049507">
    <property type="protein sequence ID" value="BAB40198.1"/>
    <property type="molecule type" value="Genomic_DNA"/>
</dbReference>
<dbReference type="GO" id="GO:0009507">
    <property type="term" value="C:chloroplast"/>
    <property type="evidence" value="ECO:0007669"/>
    <property type="project" value="UniProtKB-SubCell"/>
</dbReference>
<dbReference type="GO" id="GO:0003723">
    <property type="term" value="F:RNA binding"/>
    <property type="evidence" value="ECO:0007669"/>
    <property type="project" value="UniProtKB-KW"/>
</dbReference>
<dbReference type="GO" id="GO:0006397">
    <property type="term" value="P:mRNA processing"/>
    <property type="evidence" value="ECO:0007669"/>
    <property type="project" value="UniProtKB-KW"/>
</dbReference>
<dbReference type="GO" id="GO:0008380">
    <property type="term" value="P:RNA splicing"/>
    <property type="evidence" value="ECO:0007669"/>
    <property type="project" value="UniProtKB-UniRule"/>
</dbReference>
<dbReference type="GO" id="GO:0008033">
    <property type="term" value="P:tRNA processing"/>
    <property type="evidence" value="ECO:0007669"/>
    <property type="project" value="UniProtKB-KW"/>
</dbReference>
<dbReference type="HAMAP" id="MF_01390">
    <property type="entry name" value="MatK"/>
    <property type="match status" value="1"/>
</dbReference>
<dbReference type="InterPro" id="IPR024937">
    <property type="entry name" value="Domain_X"/>
</dbReference>
<dbReference type="InterPro" id="IPR002866">
    <property type="entry name" value="Maturase_MatK"/>
</dbReference>
<dbReference type="InterPro" id="IPR024942">
    <property type="entry name" value="Maturase_MatK_N"/>
</dbReference>
<dbReference type="PANTHER" id="PTHR34811">
    <property type="entry name" value="MATURASE K"/>
    <property type="match status" value="1"/>
</dbReference>
<dbReference type="PANTHER" id="PTHR34811:SF1">
    <property type="entry name" value="MATURASE K"/>
    <property type="match status" value="1"/>
</dbReference>
<dbReference type="Pfam" id="PF01348">
    <property type="entry name" value="Intron_maturas2"/>
    <property type="match status" value="1"/>
</dbReference>
<dbReference type="Pfam" id="PF01824">
    <property type="entry name" value="MatK_N"/>
    <property type="match status" value="1"/>
</dbReference>
<gene>
    <name evidence="1" type="primary">matK</name>
</gene>